<name>KGUA_TRIV2</name>
<dbReference type="EC" id="2.7.4.8" evidence="1"/>
<dbReference type="EMBL" id="CP000117">
    <property type="protein sequence ID" value="ABA21098.1"/>
    <property type="molecule type" value="Genomic_DNA"/>
</dbReference>
<dbReference type="SMR" id="Q3MD38"/>
<dbReference type="STRING" id="240292.Ava_1475"/>
<dbReference type="KEGG" id="ava:Ava_1475"/>
<dbReference type="eggNOG" id="COG0194">
    <property type="taxonomic scope" value="Bacteria"/>
</dbReference>
<dbReference type="HOGENOM" id="CLU_001715_1_1_3"/>
<dbReference type="Proteomes" id="UP000002533">
    <property type="component" value="Chromosome"/>
</dbReference>
<dbReference type="GO" id="GO:0005829">
    <property type="term" value="C:cytosol"/>
    <property type="evidence" value="ECO:0007669"/>
    <property type="project" value="TreeGrafter"/>
</dbReference>
<dbReference type="GO" id="GO:0005524">
    <property type="term" value="F:ATP binding"/>
    <property type="evidence" value="ECO:0007669"/>
    <property type="project" value="UniProtKB-UniRule"/>
</dbReference>
<dbReference type="GO" id="GO:0004385">
    <property type="term" value="F:guanylate kinase activity"/>
    <property type="evidence" value="ECO:0007669"/>
    <property type="project" value="UniProtKB-UniRule"/>
</dbReference>
<dbReference type="CDD" id="cd00071">
    <property type="entry name" value="GMPK"/>
    <property type="match status" value="1"/>
</dbReference>
<dbReference type="FunFam" id="3.30.63.10:FF:000002">
    <property type="entry name" value="Guanylate kinase 1"/>
    <property type="match status" value="1"/>
</dbReference>
<dbReference type="Gene3D" id="3.30.63.10">
    <property type="entry name" value="Guanylate Kinase phosphate binding domain"/>
    <property type="match status" value="1"/>
</dbReference>
<dbReference type="Gene3D" id="3.40.50.300">
    <property type="entry name" value="P-loop containing nucleotide triphosphate hydrolases"/>
    <property type="match status" value="1"/>
</dbReference>
<dbReference type="HAMAP" id="MF_00328">
    <property type="entry name" value="Guanylate_kinase"/>
    <property type="match status" value="1"/>
</dbReference>
<dbReference type="InterPro" id="IPR008145">
    <property type="entry name" value="GK/Ca_channel_bsu"/>
</dbReference>
<dbReference type="InterPro" id="IPR008144">
    <property type="entry name" value="Guanylate_kin-like_dom"/>
</dbReference>
<dbReference type="InterPro" id="IPR017665">
    <property type="entry name" value="Guanylate_kinase"/>
</dbReference>
<dbReference type="InterPro" id="IPR020590">
    <property type="entry name" value="Guanylate_kinase_CS"/>
</dbReference>
<dbReference type="InterPro" id="IPR027417">
    <property type="entry name" value="P-loop_NTPase"/>
</dbReference>
<dbReference type="NCBIfam" id="TIGR03263">
    <property type="entry name" value="guanyl_kin"/>
    <property type="match status" value="1"/>
</dbReference>
<dbReference type="PANTHER" id="PTHR23117:SF13">
    <property type="entry name" value="GUANYLATE KINASE"/>
    <property type="match status" value="1"/>
</dbReference>
<dbReference type="PANTHER" id="PTHR23117">
    <property type="entry name" value="GUANYLATE KINASE-RELATED"/>
    <property type="match status" value="1"/>
</dbReference>
<dbReference type="Pfam" id="PF00625">
    <property type="entry name" value="Guanylate_kin"/>
    <property type="match status" value="1"/>
</dbReference>
<dbReference type="SMART" id="SM00072">
    <property type="entry name" value="GuKc"/>
    <property type="match status" value="1"/>
</dbReference>
<dbReference type="SUPFAM" id="SSF52540">
    <property type="entry name" value="P-loop containing nucleoside triphosphate hydrolases"/>
    <property type="match status" value="1"/>
</dbReference>
<dbReference type="PROSITE" id="PS00856">
    <property type="entry name" value="GUANYLATE_KINASE_1"/>
    <property type="match status" value="1"/>
</dbReference>
<dbReference type="PROSITE" id="PS50052">
    <property type="entry name" value="GUANYLATE_KINASE_2"/>
    <property type="match status" value="1"/>
</dbReference>
<accession>Q3MD38</accession>
<reference key="1">
    <citation type="journal article" date="2014" name="Stand. Genomic Sci.">
        <title>Complete genome sequence of Anabaena variabilis ATCC 29413.</title>
        <authorList>
            <person name="Thiel T."/>
            <person name="Pratte B.S."/>
            <person name="Zhong J."/>
            <person name="Goodwin L."/>
            <person name="Copeland A."/>
            <person name="Lucas S."/>
            <person name="Han C."/>
            <person name="Pitluck S."/>
            <person name="Land M.L."/>
            <person name="Kyrpides N.C."/>
            <person name="Woyke T."/>
        </authorList>
    </citation>
    <scope>NUCLEOTIDE SEQUENCE [LARGE SCALE GENOMIC DNA]</scope>
    <source>
        <strain>ATCC 29413 / PCC 7937</strain>
    </source>
</reference>
<feature type="chain" id="PRO_0000266283" description="Guanylate kinase">
    <location>
        <begin position="1"/>
        <end position="199"/>
    </location>
</feature>
<feature type="domain" description="Guanylate kinase-like" evidence="1">
    <location>
        <begin position="20"/>
        <end position="198"/>
    </location>
</feature>
<feature type="binding site" evidence="1">
    <location>
        <begin position="27"/>
        <end position="34"/>
    </location>
    <ligand>
        <name>ATP</name>
        <dbReference type="ChEBI" id="CHEBI:30616"/>
    </ligand>
</feature>
<keyword id="KW-0067">ATP-binding</keyword>
<keyword id="KW-0963">Cytoplasm</keyword>
<keyword id="KW-0418">Kinase</keyword>
<keyword id="KW-0547">Nucleotide-binding</keyword>
<keyword id="KW-0808">Transferase</keyword>
<gene>
    <name evidence="1" type="primary">gmk</name>
    <name type="ordered locus">Ava_1475</name>
</gene>
<sequence>MMQVLSIQNCATTKENPSSGKLIVLTGPSGVGKGTLMRSLLQRHPELYYSVSATTRAPRPGEVNGESYYFISRNKFEELLAQGEFLESAEFAGNYYGTPREAVLNQIQSGKLVVLEIELAGARQIRASFPEALSIFILPPSFEELEKRIRGRGQDSEEAIARRLQRATEEIQAADEFDIQIVNDDFEAALQAIEVALFG</sequence>
<evidence type="ECO:0000255" key="1">
    <source>
        <dbReference type="HAMAP-Rule" id="MF_00328"/>
    </source>
</evidence>
<comment type="function">
    <text evidence="1">Essential for recycling GMP and indirectly, cGMP.</text>
</comment>
<comment type="catalytic activity">
    <reaction evidence="1">
        <text>GMP + ATP = GDP + ADP</text>
        <dbReference type="Rhea" id="RHEA:20780"/>
        <dbReference type="ChEBI" id="CHEBI:30616"/>
        <dbReference type="ChEBI" id="CHEBI:58115"/>
        <dbReference type="ChEBI" id="CHEBI:58189"/>
        <dbReference type="ChEBI" id="CHEBI:456216"/>
        <dbReference type="EC" id="2.7.4.8"/>
    </reaction>
</comment>
<comment type="subcellular location">
    <subcellularLocation>
        <location evidence="1">Cytoplasm</location>
    </subcellularLocation>
</comment>
<comment type="similarity">
    <text evidence="1">Belongs to the guanylate kinase family.</text>
</comment>
<protein>
    <recommendedName>
        <fullName evidence="1">Guanylate kinase</fullName>
        <ecNumber evidence="1">2.7.4.8</ecNumber>
    </recommendedName>
    <alternativeName>
        <fullName evidence="1">GMP kinase</fullName>
    </alternativeName>
</protein>
<organism>
    <name type="scientific">Trichormus variabilis (strain ATCC 29413 / PCC 7937)</name>
    <name type="common">Anabaena variabilis</name>
    <dbReference type="NCBI Taxonomy" id="240292"/>
    <lineage>
        <taxon>Bacteria</taxon>
        <taxon>Bacillati</taxon>
        <taxon>Cyanobacteriota</taxon>
        <taxon>Cyanophyceae</taxon>
        <taxon>Nostocales</taxon>
        <taxon>Nostocaceae</taxon>
        <taxon>Trichormus</taxon>
    </lineage>
</organism>
<proteinExistence type="inferred from homology"/>